<proteinExistence type="inferred from homology"/>
<comment type="function">
    <text evidence="1">Aspartyl-tRNA synthetase with relaxed tRNA specificity since it is able to aspartylate not only its cognate tRNA(Asp) but also tRNA(Asn). Reaction proceeds in two steps: L-aspartate is first activated by ATP to form Asp-AMP and then transferred to the acceptor end of tRNA(Asp/Asn).</text>
</comment>
<comment type="catalytic activity">
    <reaction evidence="1">
        <text>tRNA(Asx) + L-aspartate + ATP = L-aspartyl-tRNA(Asx) + AMP + diphosphate</text>
        <dbReference type="Rhea" id="RHEA:18349"/>
        <dbReference type="Rhea" id="RHEA-COMP:9710"/>
        <dbReference type="Rhea" id="RHEA-COMP:9711"/>
        <dbReference type="ChEBI" id="CHEBI:29991"/>
        <dbReference type="ChEBI" id="CHEBI:30616"/>
        <dbReference type="ChEBI" id="CHEBI:33019"/>
        <dbReference type="ChEBI" id="CHEBI:78442"/>
        <dbReference type="ChEBI" id="CHEBI:78516"/>
        <dbReference type="ChEBI" id="CHEBI:456215"/>
        <dbReference type="EC" id="6.1.1.23"/>
    </reaction>
</comment>
<comment type="subunit">
    <text evidence="1">Homodimer.</text>
</comment>
<comment type="subcellular location">
    <subcellularLocation>
        <location evidence="1">Cytoplasm</location>
    </subcellularLocation>
</comment>
<comment type="similarity">
    <text evidence="1">Belongs to the class-II aminoacyl-tRNA synthetase family. Type 1 subfamily.</text>
</comment>
<protein>
    <recommendedName>
        <fullName evidence="1">Aspartate--tRNA(Asp/Asn) ligase</fullName>
        <ecNumber evidence="1">6.1.1.23</ecNumber>
    </recommendedName>
    <alternativeName>
        <fullName evidence="1">Aspartyl-tRNA synthetase</fullName>
        <shortName evidence="1">AspRS</shortName>
    </alternativeName>
    <alternativeName>
        <fullName evidence="1">Non-discriminating aspartyl-tRNA synthetase</fullName>
        <shortName evidence="1">ND-AspRS</shortName>
    </alternativeName>
</protein>
<feature type="chain" id="PRO_1000198974" description="Aspartate--tRNA(Asp/Asn) ligase">
    <location>
        <begin position="1"/>
        <end position="606"/>
    </location>
</feature>
<feature type="region of interest" description="Aspartate" evidence="1">
    <location>
        <begin position="199"/>
        <end position="202"/>
    </location>
</feature>
<feature type="region of interest" description="Disordered" evidence="2">
    <location>
        <begin position="564"/>
        <end position="606"/>
    </location>
</feature>
<feature type="compositionally biased region" description="Basic and acidic residues" evidence="2">
    <location>
        <begin position="579"/>
        <end position="594"/>
    </location>
</feature>
<feature type="binding site" evidence="1">
    <location>
        <position position="175"/>
    </location>
    <ligand>
        <name>L-aspartate</name>
        <dbReference type="ChEBI" id="CHEBI:29991"/>
    </ligand>
</feature>
<feature type="binding site" evidence="1">
    <location>
        <begin position="221"/>
        <end position="223"/>
    </location>
    <ligand>
        <name>ATP</name>
        <dbReference type="ChEBI" id="CHEBI:30616"/>
    </ligand>
</feature>
<feature type="binding site" evidence="1">
    <location>
        <position position="221"/>
    </location>
    <ligand>
        <name>L-aspartate</name>
        <dbReference type="ChEBI" id="CHEBI:29991"/>
    </ligand>
</feature>
<feature type="binding site" evidence="1">
    <location>
        <position position="230"/>
    </location>
    <ligand>
        <name>ATP</name>
        <dbReference type="ChEBI" id="CHEBI:30616"/>
    </ligand>
</feature>
<feature type="binding site" evidence="1">
    <location>
        <position position="453"/>
    </location>
    <ligand>
        <name>L-aspartate</name>
        <dbReference type="ChEBI" id="CHEBI:29991"/>
    </ligand>
</feature>
<feature type="binding site" evidence="1">
    <location>
        <position position="487"/>
    </location>
    <ligand>
        <name>ATP</name>
        <dbReference type="ChEBI" id="CHEBI:30616"/>
    </ligand>
</feature>
<feature type="binding site" evidence="1">
    <location>
        <position position="494"/>
    </location>
    <ligand>
        <name>L-aspartate</name>
        <dbReference type="ChEBI" id="CHEBI:29991"/>
    </ligand>
</feature>
<feature type="binding site" evidence="1">
    <location>
        <begin position="539"/>
        <end position="542"/>
    </location>
    <ligand>
        <name>ATP</name>
        <dbReference type="ChEBI" id="CHEBI:30616"/>
    </ligand>
</feature>
<feature type="site" description="Important for tRNA non-discrimination" evidence="1">
    <location>
        <position position="31"/>
    </location>
</feature>
<feature type="site" description="Important for tRNA non-discrimination" evidence="1">
    <location>
        <position position="80"/>
    </location>
</feature>
<dbReference type="EC" id="6.1.1.23" evidence="1"/>
<dbReference type="EMBL" id="CP001601">
    <property type="protein sequence ID" value="ACP32989.1"/>
    <property type="molecule type" value="Genomic_DNA"/>
</dbReference>
<dbReference type="RefSeq" id="WP_010190145.1">
    <property type="nucleotide sequence ID" value="NC_012590.1"/>
</dbReference>
<dbReference type="SMR" id="C3PGN5"/>
<dbReference type="STRING" id="548476.cauri_1396"/>
<dbReference type="GeneID" id="31924022"/>
<dbReference type="KEGG" id="car:cauri_1396"/>
<dbReference type="eggNOG" id="COG0173">
    <property type="taxonomic scope" value="Bacteria"/>
</dbReference>
<dbReference type="HOGENOM" id="CLU_014330_3_2_11"/>
<dbReference type="OrthoDB" id="9802326at2"/>
<dbReference type="Proteomes" id="UP000002077">
    <property type="component" value="Chromosome"/>
</dbReference>
<dbReference type="GO" id="GO:0005737">
    <property type="term" value="C:cytoplasm"/>
    <property type="evidence" value="ECO:0007669"/>
    <property type="project" value="UniProtKB-SubCell"/>
</dbReference>
<dbReference type="GO" id="GO:0004815">
    <property type="term" value="F:aspartate-tRNA ligase activity"/>
    <property type="evidence" value="ECO:0007669"/>
    <property type="project" value="UniProtKB-UniRule"/>
</dbReference>
<dbReference type="GO" id="GO:0050560">
    <property type="term" value="F:aspartate-tRNA(Asn) ligase activity"/>
    <property type="evidence" value="ECO:0007669"/>
    <property type="project" value="UniProtKB-EC"/>
</dbReference>
<dbReference type="GO" id="GO:0005524">
    <property type="term" value="F:ATP binding"/>
    <property type="evidence" value="ECO:0007669"/>
    <property type="project" value="UniProtKB-UniRule"/>
</dbReference>
<dbReference type="GO" id="GO:0003676">
    <property type="term" value="F:nucleic acid binding"/>
    <property type="evidence" value="ECO:0007669"/>
    <property type="project" value="InterPro"/>
</dbReference>
<dbReference type="GO" id="GO:0006422">
    <property type="term" value="P:aspartyl-tRNA aminoacylation"/>
    <property type="evidence" value="ECO:0007669"/>
    <property type="project" value="UniProtKB-UniRule"/>
</dbReference>
<dbReference type="CDD" id="cd00777">
    <property type="entry name" value="AspRS_core"/>
    <property type="match status" value="1"/>
</dbReference>
<dbReference type="CDD" id="cd04317">
    <property type="entry name" value="EcAspRS_like_N"/>
    <property type="match status" value="1"/>
</dbReference>
<dbReference type="Gene3D" id="3.30.930.10">
    <property type="entry name" value="Bira Bifunctional Protein, Domain 2"/>
    <property type="match status" value="1"/>
</dbReference>
<dbReference type="Gene3D" id="3.30.1360.30">
    <property type="entry name" value="GAD-like domain"/>
    <property type="match status" value="1"/>
</dbReference>
<dbReference type="Gene3D" id="2.40.50.140">
    <property type="entry name" value="Nucleic acid-binding proteins"/>
    <property type="match status" value="1"/>
</dbReference>
<dbReference type="HAMAP" id="MF_00044">
    <property type="entry name" value="Asp_tRNA_synth_type1"/>
    <property type="match status" value="1"/>
</dbReference>
<dbReference type="InterPro" id="IPR004364">
    <property type="entry name" value="Aa-tRNA-synt_II"/>
</dbReference>
<dbReference type="InterPro" id="IPR006195">
    <property type="entry name" value="aa-tRNA-synth_II"/>
</dbReference>
<dbReference type="InterPro" id="IPR045864">
    <property type="entry name" value="aa-tRNA-synth_II/BPL/LPL"/>
</dbReference>
<dbReference type="InterPro" id="IPR004524">
    <property type="entry name" value="Asp-tRNA-ligase_1"/>
</dbReference>
<dbReference type="InterPro" id="IPR047089">
    <property type="entry name" value="Asp-tRNA-ligase_1_N"/>
</dbReference>
<dbReference type="InterPro" id="IPR002312">
    <property type="entry name" value="Asp/Asn-tRNA-synth_IIb"/>
</dbReference>
<dbReference type="InterPro" id="IPR047090">
    <property type="entry name" value="AspRS_core"/>
</dbReference>
<dbReference type="InterPro" id="IPR004115">
    <property type="entry name" value="GAD-like_sf"/>
</dbReference>
<dbReference type="InterPro" id="IPR029351">
    <property type="entry name" value="GAD_dom"/>
</dbReference>
<dbReference type="InterPro" id="IPR012340">
    <property type="entry name" value="NA-bd_OB-fold"/>
</dbReference>
<dbReference type="InterPro" id="IPR004365">
    <property type="entry name" value="NA-bd_OB_tRNA"/>
</dbReference>
<dbReference type="NCBIfam" id="TIGR00459">
    <property type="entry name" value="aspS_bact"/>
    <property type="match status" value="1"/>
</dbReference>
<dbReference type="NCBIfam" id="NF001750">
    <property type="entry name" value="PRK00476.1"/>
    <property type="match status" value="1"/>
</dbReference>
<dbReference type="PANTHER" id="PTHR22594:SF5">
    <property type="entry name" value="ASPARTATE--TRNA LIGASE, MITOCHONDRIAL"/>
    <property type="match status" value="1"/>
</dbReference>
<dbReference type="PANTHER" id="PTHR22594">
    <property type="entry name" value="ASPARTYL/LYSYL-TRNA SYNTHETASE"/>
    <property type="match status" value="1"/>
</dbReference>
<dbReference type="Pfam" id="PF02938">
    <property type="entry name" value="GAD"/>
    <property type="match status" value="1"/>
</dbReference>
<dbReference type="Pfam" id="PF00152">
    <property type="entry name" value="tRNA-synt_2"/>
    <property type="match status" value="1"/>
</dbReference>
<dbReference type="Pfam" id="PF01336">
    <property type="entry name" value="tRNA_anti-codon"/>
    <property type="match status" value="1"/>
</dbReference>
<dbReference type="PRINTS" id="PR01042">
    <property type="entry name" value="TRNASYNTHASP"/>
</dbReference>
<dbReference type="SUPFAM" id="SSF55681">
    <property type="entry name" value="Class II aaRS and biotin synthetases"/>
    <property type="match status" value="1"/>
</dbReference>
<dbReference type="SUPFAM" id="SSF55261">
    <property type="entry name" value="GAD domain-like"/>
    <property type="match status" value="1"/>
</dbReference>
<dbReference type="SUPFAM" id="SSF50249">
    <property type="entry name" value="Nucleic acid-binding proteins"/>
    <property type="match status" value="1"/>
</dbReference>
<dbReference type="PROSITE" id="PS50862">
    <property type="entry name" value="AA_TRNA_LIGASE_II"/>
    <property type="match status" value="1"/>
</dbReference>
<evidence type="ECO:0000255" key="1">
    <source>
        <dbReference type="HAMAP-Rule" id="MF_00044"/>
    </source>
</evidence>
<evidence type="ECO:0000256" key="2">
    <source>
        <dbReference type="SAM" id="MobiDB-lite"/>
    </source>
</evidence>
<name>SYDND_CORA7</name>
<sequence length="606" mass="66878">MLRTHLAGELRKEMAGETVTLTGWVARRRDHGGVIFIDLRDRSGVAQVVFRESEVAERAHDLRSEYCVKVTGVVEPRPEGSANANLASGEIEVNVSDLEVLNKSAALPFQIDDPSSSGEVGEETRLKYRYLDLRRERQHEALRLRSAANRAAREVLDSHDFTEIETPTLTRSTPEGARDFLVPARLKPGSWYALPQSPQLFKQLLMVAGMERYYQIARCYRDEDFRADRQPEFTQLDVEMSFVDQDDVIALAEEIVSALWKLIGYEIKTPIPRMTYADAMKYYGSDKPDLRFDIKIVECTEFFKDTTFRVFQNEYVGAVVMEGGASQPRRQFDAWQEWAKQRGAKGLAYITIAEDGTLGGPVAKNITDAEREGIAEHVGAKPGDAIFFAAGDVKSSRALLGAARGEIAKKLDLIKDGDWAFTWVVDAPLFEPAADATASGDVALGHSKWTAVHHAFTSPKPEYLDSFDENPGEALAYAYDIVCNGNEIGGGSIRIHDQDVQKRVFDVMGIGEEEAQEKFGFLLDAFQFGAPPHGGIAFGWDRIVSLLGGFDSIRDVIAFPKSGGGVDPLTDAPGTIPAEQRKETGVDFKPEKAAKAAQGEKAGKES</sequence>
<reference key="1">
    <citation type="journal article" date="2010" name="BMC Genomics">
        <title>Complete genome sequence and lifestyle of black-pigmented Corynebacterium aurimucosum ATCC 700975 (formerly C. nigricans CN-1) isolated from a vaginal swab of a woman with spontaneous abortion.</title>
        <authorList>
            <person name="Trost E."/>
            <person name="Gotker S."/>
            <person name="Schneider J."/>
            <person name="Schneiker-Bekel S."/>
            <person name="Szczepanowski R."/>
            <person name="Tilker A."/>
            <person name="Viehoever P."/>
            <person name="Arnold W."/>
            <person name="Bekel T."/>
            <person name="Blom J."/>
            <person name="Gartemann K.H."/>
            <person name="Linke B."/>
            <person name="Goesmann A."/>
            <person name="Puhler A."/>
            <person name="Shukla S.K."/>
            <person name="Tauch A."/>
        </authorList>
    </citation>
    <scope>NUCLEOTIDE SEQUENCE [LARGE SCALE GENOMIC DNA]</scope>
    <source>
        <strain>ATCC 700975 / DSM 44827 / CIP 107346 / CN-1</strain>
    </source>
</reference>
<gene>
    <name evidence="1" type="primary">aspS</name>
    <name type="ordered locus">cauri_1396</name>
</gene>
<keyword id="KW-0030">Aminoacyl-tRNA synthetase</keyword>
<keyword id="KW-0067">ATP-binding</keyword>
<keyword id="KW-0963">Cytoplasm</keyword>
<keyword id="KW-0436">Ligase</keyword>
<keyword id="KW-0547">Nucleotide-binding</keyword>
<keyword id="KW-0648">Protein biosynthesis</keyword>
<keyword id="KW-1185">Reference proteome</keyword>
<accession>C3PGN5</accession>
<organism>
    <name type="scientific">Corynebacterium aurimucosum (strain ATCC 700975 / DSM 44827 / CIP 107346 / CN-1)</name>
    <name type="common">Corynebacterium nigricans</name>
    <dbReference type="NCBI Taxonomy" id="548476"/>
    <lineage>
        <taxon>Bacteria</taxon>
        <taxon>Bacillati</taxon>
        <taxon>Actinomycetota</taxon>
        <taxon>Actinomycetes</taxon>
        <taxon>Mycobacteriales</taxon>
        <taxon>Corynebacteriaceae</taxon>
        <taxon>Corynebacterium</taxon>
    </lineage>
</organism>